<feature type="chain" id="PRO_0000431284" description="Probable NAD(P)H dehydrogenase (quinone) FQR1-like 1">
    <location>
        <begin position="1"/>
        <end position="205"/>
    </location>
</feature>
<feature type="domain" description="Flavodoxin-like" evidence="3">
    <location>
        <begin position="5"/>
        <end position="192"/>
    </location>
</feature>
<feature type="binding site" evidence="3">
    <location>
        <begin position="11"/>
        <end position="15"/>
    </location>
    <ligand>
        <name>FMN</name>
        <dbReference type="ChEBI" id="CHEBI:58210"/>
    </ligand>
</feature>
<feature type="binding site" evidence="1">
    <location>
        <position position="13"/>
    </location>
    <ligand>
        <name>NAD(+)</name>
        <dbReference type="ChEBI" id="CHEBI:57540"/>
    </ligand>
</feature>
<feature type="binding site" evidence="3">
    <location>
        <begin position="112"/>
        <end position="165"/>
    </location>
    <ligand>
        <name>FMN</name>
        <dbReference type="ChEBI" id="CHEBI:58210"/>
    </ligand>
</feature>
<feature type="binding site" evidence="1">
    <location>
        <position position="136"/>
    </location>
    <ligand>
        <name>FMN</name>
        <dbReference type="ChEBI" id="CHEBI:58210"/>
    </ligand>
</feature>
<dbReference type="EC" id="1.6.5.2" evidence="2"/>
<dbReference type="EMBL" id="AL030978">
    <property type="protein sequence ID" value="CAA19721.1"/>
    <property type="status" value="ALT_SEQ"/>
    <property type="molecule type" value="Genomic_DNA"/>
</dbReference>
<dbReference type="EMBL" id="AL161566">
    <property type="protein sequence ID" value="CAB79582.1"/>
    <property type="status" value="ALT_SEQ"/>
    <property type="molecule type" value="Genomic_DNA"/>
</dbReference>
<dbReference type="EMBL" id="CP002687">
    <property type="protein sequence ID" value="AEE85319.1"/>
    <property type="molecule type" value="Genomic_DNA"/>
</dbReference>
<dbReference type="EMBL" id="BT010514">
    <property type="protein sequence ID" value="AAQ65137.1"/>
    <property type="molecule type" value="mRNA"/>
</dbReference>
<dbReference type="EMBL" id="AK221196">
    <property type="protein sequence ID" value="BAD95300.1"/>
    <property type="molecule type" value="mRNA"/>
</dbReference>
<dbReference type="PIR" id="T05751">
    <property type="entry name" value="T05751"/>
</dbReference>
<dbReference type="RefSeq" id="NP_194457.2">
    <property type="nucleotide sequence ID" value="NM_118861.5"/>
</dbReference>
<dbReference type="SMR" id="Q6NQE2"/>
<dbReference type="BioGRID" id="14122">
    <property type="interactions" value="1"/>
</dbReference>
<dbReference type="FunCoup" id="Q6NQE2">
    <property type="interactions" value="577"/>
</dbReference>
<dbReference type="IntAct" id="Q6NQE2">
    <property type="interactions" value="1"/>
</dbReference>
<dbReference type="STRING" id="3702.Q6NQE2"/>
<dbReference type="iPTMnet" id="Q6NQE2"/>
<dbReference type="PaxDb" id="3702-AT4G27270.1"/>
<dbReference type="ProteomicsDB" id="230609"/>
<dbReference type="DNASU" id="828835"/>
<dbReference type="EnsemblPlants" id="AT4G27270.1">
    <property type="protein sequence ID" value="AT4G27270.1"/>
    <property type="gene ID" value="AT4G27270"/>
</dbReference>
<dbReference type="GeneID" id="828835"/>
<dbReference type="Gramene" id="AT4G27270.1">
    <property type="protein sequence ID" value="AT4G27270.1"/>
    <property type="gene ID" value="AT4G27270"/>
</dbReference>
<dbReference type="KEGG" id="ath:AT4G27270"/>
<dbReference type="Araport" id="AT4G27270"/>
<dbReference type="TAIR" id="AT4G27270"/>
<dbReference type="eggNOG" id="KOG3135">
    <property type="taxonomic scope" value="Eukaryota"/>
</dbReference>
<dbReference type="HOGENOM" id="CLU_051402_0_1_1"/>
<dbReference type="InParanoid" id="Q6NQE2"/>
<dbReference type="OMA" id="KFADGNP"/>
<dbReference type="OrthoDB" id="504689at2759"/>
<dbReference type="PhylomeDB" id="Q6NQE2"/>
<dbReference type="BioCyc" id="ARA:AT4G27270-MONOMER"/>
<dbReference type="CD-CODE" id="4299E36E">
    <property type="entry name" value="Nucleolus"/>
</dbReference>
<dbReference type="PRO" id="PR:Q6NQE2"/>
<dbReference type="Proteomes" id="UP000006548">
    <property type="component" value="Chromosome 4"/>
</dbReference>
<dbReference type="ExpressionAtlas" id="Q6NQE2">
    <property type="expression patterns" value="baseline and differential"/>
</dbReference>
<dbReference type="GO" id="GO:0005829">
    <property type="term" value="C:cytosol"/>
    <property type="evidence" value="ECO:0007005"/>
    <property type="project" value="TAIR"/>
</dbReference>
<dbReference type="GO" id="GO:0005886">
    <property type="term" value="C:plasma membrane"/>
    <property type="evidence" value="ECO:0007005"/>
    <property type="project" value="TAIR"/>
</dbReference>
<dbReference type="GO" id="GO:0009506">
    <property type="term" value="C:plasmodesma"/>
    <property type="evidence" value="ECO:0007005"/>
    <property type="project" value="TAIR"/>
</dbReference>
<dbReference type="GO" id="GO:0010181">
    <property type="term" value="F:FMN binding"/>
    <property type="evidence" value="ECO:0007669"/>
    <property type="project" value="InterPro"/>
</dbReference>
<dbReference type="GO" id="GO:0050136">
    <property type="term" value="F:NADH:ubiquinone reductase (non-electrogenic) activity"/>
    <property type="evidence" value="ECO:0007669"/>
    <property type="project" value="RHEA"/>
</dbReference>
<dbReference type="GO" id="GO:0008753">
    <property type="term" value="F:NADPH dehydrogenase (quinone) activity"/>
    <property type="evidence" value="ECO:0007669"/>
    <property type="project" value="RHEA"/>
</dbReference>
<dbReference type="FunFam" id="3.40.50.360:FF:000001">
    <property type="entry name" value="NAD(P)H dehydrogenase (Quinone) FQR1-like"/>
    <property type="match status" value="1"/>
</dbReference>
<dbReference type="Gene3D" id="3.40.50.360">
    <property type="match status" value="1"/>
</dbReference>
<dbReference type="InterPro" id="IPR008254">
    <property type="entry name" value="Flavodoxin/NO_synth"/>
</dbReference>
<dbReference type="InterPro" id="IPR029039">
    <property type="entry name" value="Flavoprotein-like_sf"/>
</dbReference>
<dbReference type="InterPro" id="IPR010089">
    <property type="entry name" value="Flavoprotein_WrbA-like"/>
</dbReference>
<dbReference type="InterPro" id="IPR005025">
    <property type="entry name" value="FMN_Rdtase-like_dom"/>
</dbReference>
<dbReference type="NCBIfam" id="TIGR01755">
    <property type="entry name" value="flav_wrbA"/>
    <property type="match status" value="1"/>
</dbReference>
<dbReference type="NCBIfam" id="NF002999">
    <property type="entry name" value="PRK03767.1"/>
    <property type="match status" value="1"/>
</dbReference>
<dbReference type="PANTHER" id="PTHR30546">
    <property type="entry name" value="FLAVODOXIN-RELATED PROTEIN WRBA-RELATED"/>
    <property type="match status" value="1"/>
</dbReference>
<dbReference type="PANTHER" id="PTHR30546:SF46">
    <property type="entry name" value="NAD(P)H DEHYDROGENASE (QUINONE) FQR1-LIKE 1-RELATED"/>
    <property type="match status" value="1"/>
</dbReference>
<dbReference type="Pfam" id="PF03358">
    <property type="entry name" value="FMN_red"/>
    <property type="match status" value="1"/>
</dbReference>
<dbReference type="SUPFAM" id="SSF52218">
    <property type="entry name" value="Flavoproteins"/>
    <property type="match status" value="1"/>
</dbReference>
<dbReference type="PROSITE" id="PS50902">
    <property type="entry name" value="FLAVODOXIN_LIKE"/>
    <property type="match status" value="1"/>
</dbReference>
<accession>Q6NQE2</accession>
<accession>O81830</accession>
<reference key="1">
    <citation type="journal article" date="1999" name="Nature">
        <title>Sequence and analysis of chromosome 4 of the plant Arabidopsis thaliana.</title>
        <authorList>
            <person name="Mayer K.F.X."/>
            <person name="Schueller C."/>
            <person name="Wambutt R."/>
            <person name="Murphy G."/>
            <person name="Volckaert G."/>
            <person name="Pohl T."/>
            <person name="Duesterhoeft A."/>
            <person name="Stiekema W."/>
            <person name="Entian K.-D."/>
            <person name="Terryn N."/>
            <person name="Harris B."/>
            <person name="Ansorge W."/>
            <person name="Brandt P."/>
            <person name="Grivell L.A."/>
            <person name="Rieger M."/>
            <person name="Weichselgartner M."/>
            <person name="de Simone V."/>
            <person name="Obermaier B."/>
            <person name="Mache R."/>
            <person name="Mueller M."/>
            <person name="Kreis M."/>
            <person name="Delseny M."/>
            <person name="Puigdomenech P."/>
            <person name="Watson M."/>
            <person name="Schmidtheini T."/>
            <person name="Reichert B."/>
            <person name="Portetelle D."/>
            <person name="Perez-Alonso M."/>
            <person name="Boutry M."/>
            <person name="Bancroft I."/>
            <person name="Vos P."/>
            <person name="Hoheisel J."/>
            <person name="Zimmermann W."/>
            <person name="Wedler H."/>
            <person name="Ridley P."/>
            <person name="Langham S.-A."/>
            <person name="McCullagh B."/>
            <person name="Bilham L."/>
            <person name="Robben J."/>
            <person name="van der Schueren J."/>
            <person name="Grymonprez B."/>
            <person name="Chuang Y.-J."/>
            <person name="Vandenbussche F."/>
            <person name="Braeken M."/>
            <person name="Weltjens I."/>
            <person name="Voet M."/>
            <person name="Bastiaens I."/>
            <person name="Aert R."/>
            <person name="Defoor E."/>
            <person name="Weitzenegger T."/>
            <person name="Bothe G."/>
            <person name="Ramsperger U."/>
            <person name="Hilbert H."/>
            <person name="Braun M."/>
            <person name="Holzer E."/>
            <person name="Brandt A."/>
            <person name="Peters S."/>
            <person name="van Staveren M."/>
            <person name="Dirkse W."/>
            <person name="Mooijman P."/>
            <person name="Klein Lankhorst R."/>
            <person name="Rose M."/>
            <person name="Hauf J."/>
            <person name="Koetter P."/>
            <person name="Berneiser S."/>
            <person name="Hempel S."/>
            <person name="Feldpausch M."/>
            <person name="Lamberth S."/>
            <person name="Van den Daele H."/>
            <person name="De Keyser A."/>
            <person name="Buysshaert C."/>
            <person name="Gielen J."/>
            <person name="Villarroel R."/>
            <person name="De Clercq R."/>
            <person name="van Montagu M."/>
            <person name="Rogers J."/>
            <person name="Cronin A."/>
            <person name="Quail M.A."/>
            <person name="Bray-Allen S."/>
            <person name="Clark L."/>
            <person name="Doggett J."/>
            <person name="Hall S."/>
            <person name="Kay M."/>
            <person name="Lennard N."/>
            <person name="McLay K."/>
            <person name="Mayes R."/>
            <person name="Pettett A."/>
            <person name="Rajandream M.A."/>
            <person name="Lyne M."/>
            <person name="Benes V."/>
            <person name="Rechmann S."/>
            <person name="Borkova D."/>
            <person name="Bloecker H."/>
            <person name="Scharfe M."/>
            <person name="Grimm M."/>
            <person name="Loehnert T.-H."/>
            <person name="Dose S."/>
            <person name="de Haan M."/>
            <person name="Maarse A.C."/>
            <person name="Schaefer M."/>
            <person name="Mueller-Auer S."/>
            <person name="Gabel C."/>
            <person name="Fuchs M."/>
            <person name="Fartmann B."/>
            <person name="Granderath K."/>
            <person name="Dauner D."/>
            <person name="Herzl A."/>
            <person name="Neumann S."/>
            <person name="Argiriou A."/>
            <person name="Vitale D."/>
            <person name="Liguori R."/>
            <person name="Piravandi E."/>
            <person name="Massenet O."/>
            <person name="Quigley F."/>
            <person name="Clabauld G."/>
            <person name="Muendlein A."/>
            <person name="Felber R."/>
            <person name="Schnabl S."/>
            <person name="Hiller R."/>
            <person name="Schmidt W."/>
            <person name="Lecharny A."/>
            <person name="Aubourg S."/>
            <person name="Chefdor F."/>
            <person name="Cooke R."/>
            <person name="Berger C."/>
            <person name="Monfort A."/>
            <person name="Casacuberta E."/>
            <person name="Gibbons T."/>
            <person name="Weber N."/>
            <person name="Vandenbol M."/>
            <person name="Bargues M."/>
            <person name="Terol J."/>
            <person name="Torres A."/>
            <person name="Perez-Perez A."/>
            <person name="Purnelle B."/>
            <person name="Bent E."/>
            <person name="Johnson S."/>
            <person name="Tacon D."/>
            <person name="Jesse T."/>
            <person name="Heijnen L."/>
            <person name="Schwarz S."/>
            <person name="Scholler P."/>
            <person name="Heber S."/>
            <person name="Francs P."/>
            <person name="Bielke C."/>
            <person name="Frishman D."/>
            <person name="Haase D."/>
            <person name="Lemcke K."/>
            <person name="Mewes H.-W."/>
            <person name="Stocker S."/>
            <person name="Zaccaria P."/>
            <person name="Bevan M."/>
            <person name="Wilson R.K."/>
            <person name="de la Bastide M."/>
            <person name="Habermann K."/>
            <person name="Parnell L."/>
            <person name="Dedhia N."/>
            <person name="Gnoj L."/>
            <person name="Schutz K."/>
            <person name="Huang E."/>
            <person name="Spiegel L."/>
            <person name="Sekhon M."/>
            <person name="Murray J."/>
            <person name="Sheet P."/>
            <person name="Cordes M."/>
            <person name="Abu-Threideh J."/>
            <person name="Stoneking T."/>
            <person name="Kalicki J."/>
            <person name="Graves T."/>
            <person name="Harmon G."/>
            <person name="Edwards J."/>
            <person name="Latreille P."/>
            <person name="Courtney L."/>
            <person name="Cloud J."/>
            <person name="Abbott A."/>
            <person name="Scott K."/>
            <person name="Johnson D."/>
            <person name="Minx P."/>
            <person name="Bentley D."/>
            <person name="Fulton B."/>
            <person name="Miller N."/>
            <person name="Greco T."/>
            <person name="Kemp K."/>
            <person name="Kramer J."/>
            <person name="Fulton L."/>
            <person name="Mardis E."/>
            <person name="Dante M."/>
            <person name="Pepin K."/>
            <person name="Hillier L.W."/>
            <person name="Nelson J."/>
            <person name="Spieth J."/>
            <person name="Ryan E."/>
            <person name="Andrews S."/>
            <person name="Geisel C."/>
            <person name="Layman D."/>
            <person name="Du H."/>
            <person name="Ali J."/>
            <person name="Berghoff A."/>
            <person name="Jones K."/>
            <person name="Drone K."/>
            <person name="Cotton M."/>
            <person name="Joshu C."/>
            <person name="Antonoiu B."/>
            <person name="Zidanic M."/>
            <person name="Strong C."/>
            <person name="Sun H."/>
            <person name="Lamar B."/>
            <person name="Yordan C."/>
            <person name="Ma P."/>
            <person name="Zhong J."/>
            <person name="Preston R."/>
            <person name="Vil D."/>
            <person name="Shekher M."/>
            <person name="Matero A."/>
            <person name="Shah R."/>
            <person name="Swaby I.K."/>
            <person name="O'Shaughnessy A."/>
            <person name="Rodriguez M."/>
            <person name="Hoffman J."/>
            <person name="Till S."/>
            <person name="Granat S."/>
            <person name="Shohdy N."/>
            <person name="Hasegawa A."/>
            <person name="Hameed A."/>
            <person name="Lodhi M."/>
            <person name="Johnson A."/>
            <person name="Chen E."/>
            <person name="Marra M.A."/>
            <person name="Martienssen R."/>
            <person name="McCombie W.R."/>
        </authorList>
    </citation>
    <scope>NUCLEOTIDE SEQUENCE [LARGE SCALE GENOMIC DNA]</scope>
    <source>
        <strain>cv. Columbia</strain>
    </source>
</reference>
<reference key="2">
    <citation type="journal article" date="2017" name="Plant J.">
        <title>Araport11: a complete reannotation of the Arabidopsis thaliana reference genome.</title>
        <authorList>
            <person name="Cheng C.Y."/>
            <person name="Krishnakumar V."/>
            <person name="Chan A.P."/>
            <person name="Thibaud-Nissen F."/>
            <person name="Schobel S."/>
            <person name="Town C.D."/>
        </authorList>
    </citation>
    <scope>GENOME REANNOTATION</scope>
    <source>
        <strain>cv. Columbia</strain>
    </source>
</reference>
<reference key="3">
    <citation type="journal article" date="2003" name="Science">
        <title>Empirical analysis of transcriptional activity in the Arabidopsis genome.</title>
        <authorList>
            <person name="Yamada K."/>
            <person name="Lim J."/>
            <person name="Dale J.M."/>
            <person name="Chen H."/>
            <person name="Shinn P."/>
            <person name="Palm C.J."/>
            <person name="Southwick A.M."/>
            <person name="Wu H.C."/>
            <person name="Kim C.J."/>
            <person name="Nguyen M."/>
            <person name="Pham P.K."/>
            <person name="Cheuk R.F."/>
            <person name="Karlin-Newmann G."/>
            <person name="Liu S.X."/>
            <person name="Lam B."/>
            <person name="Sakano H."/>
            <person name="Wu T."/>
            <person name="Yu G."/>
            <person name="Miranda M."/>
            <person name="Quach H.L."/>
            <person name="Tripp M."/>
            <person name="Chang C.H."/>
            <person name="Lee J.M."/>
            <person name="Toriumi M.J."/>
            <person name="Chan M.M."/>
            <person name="Tang C.C."/>
            <person name="Onodera C.S."/>
            <person name="Deng J.M."/>
            <person name="Akiyama K."/>
            <person name="Ansari Y."/>
            <person name="Arakawa T."/>
            <person name="Banh J."/>
            <person name="Banno F."/>
            <person name="Bowser L."/>
            <person name="Brooks S.Y."/>
            <person name="Carninci P."/>
            <person name="Chao Q."/>
            <person name="Choy N."/>
            <person name="Enju A."/>
            <person name="Goldsmith A.D."/>
            <person name="Gurjal M."/>
            <person name="Hansen N.F."/>
            <person name="Hayashizaki Y."/>
            <person name="Johnson-Hopson C."/>
            <person name="Hsuan V.W."/>
            <person name="Iida K."/>
            <person name="Karnes M."/>
            <person name="Khan S."/>
            <person name="Koesema E."/>
            <person name="Ishida J."/>
            <person name="Jiang P.X."/>
            <person name="Jones T."/>
            <person name="Kawai J."/>
            <person name="Kamiya A."/>
            <person name="Meyers C."/>
            <person name="Nakajima M."/>
            <person name="Narusaka M."/>
            <person name="Seki M."/>
            <person name="Sakurai T."/>
            <person name="Satou M."/>
            <person name="Tamse R."/>
            <person name="Vaysberg M."/>
            <person name="Wallender E.K."/>
            <person name="Wong C."/>
            <person name="Yamamura Y."/>
            <person name="Yuan S."/>
            <person name="Shinozaki K."/>
            <person name="Davis R.W."/>
            <person name="Theologis A."/>
            <person name="Ecker J.R."/>
        </authorList>
    </citation>
    <scope>NUCLEOTIDE SEQUENCE [LARGE SCALE MRNA]</scope>
    <source>
        <strain>cv. Columbia</strain>
    </source>
</reference>
<reference key="4">
    <citation type="submission" date="2005-03" db="EMBL/GenBank/DDBJ databases">
        <title>Large-scale analysis of RIKEN Arabidopsis full-length (RAFL) cDNAs.</title>
        <authorList>
            <person name="Totoki Y."/>
            <person name="Seki M."/>
            <person name="Ishida J."/>
            <person name="Nakajima M."/>
            <person name="Enju A."/>
            <person name="Kamiya A."/>
            <person name="Narusaka M."/>
            <person name="Shin-i T."/>
            <person name="Nakagawa M."/>
            <person name="Sakamoto N."/>
            <person name="Oishi K."/>
            <person name="Kohara Y."/>
            <person name="Kobayashi M."/>
            <person name="Toyoda A."/>
            <person name="Sakaki Y."/>
            <person name="Sakurai T."/>
            <person name="Iida K."/>
            <person name="Akiyama K."/>
            <person name="Satou M."/>
            <person name="Toyoda T."/>
            <person name="Konagaya A."/>
            <person name="Carninci P."/>
            <person name="Kawai J."/>
            <person name="Hayashizaki Y."/>
            <person name="Shinozaki K."/>
        </authorList>
    </citation>
    <scope>NUCLEOTIDE SEQUENCE [LARGE SCALE MRNA]</scope>
    <source>
        <strain>cv. Columbia</strain>
    </source>
</reference>
<reference key="5">
    <citation type="journal article" date="2004" name="Mol. Cell. Proteomics">
        <title>Identification of new intrinsic proteins in Arabidopsis plasma membrane proteome.</title>
        <authorList>
            <person name="Marmagne A."/>
            <person name="Rouet M.-A."/>
            <person name="Ferro M."/>
            <person name="Rolland N."/>
            <person name="Alcon C."/>
            <person name="Joyard J."/>
            <person name="Garin J."/>
            <person name="Barbier-Brygoo H."/>
            <person name="Ephritikhine G."/>
        </authorList>
    </citation>
    <scope>IDENTIFICATION BY MASS SPECTROMETRY</scope>
    <scope>SUBCELLULAR LOCATION</scope>
</reference>
<protein>
    <recommendedName>
        <fullName evidence="5">Probable NAD(P)H dehydrogenase (quinone) FQR1-like 1</fullName>
        <ecNumber evidence="2">1.6.5.2</ecNumber>
    </recommendedName>
</protein>
<proteinExistence type="evidence at protein level"/>
<name>FQRL1_ARATH</name>
<keyword id="KW-1003">Cell membrane</keyword>
<keyword id="KW-0285">Flavoprotein</keyword>
<keyword id="KW-0288">FMN</keyword>
<keyword id="KW-0472">Membrane</keyword>
<keyword id="KW-0520">NAD</keyword>
<keyword id="KW-0521">NADP</keyword>
<keyword id="KW-0547">Nucleotide-binding</keyword>
<keyword id="KW-0560">Oxidoreductase</keyword>
<keyword id="KW-1185">Reference proteome</keyword>
<organism>
    <name type="scientific">Arabidopsis thaliana</name>
    <name type="common">Mouse-ear cress</name>
    <dbReference type="NCBI Taxonomy" id="3702"/>
    <lineage>
        <taxon>Eukaryota</taxon>
        <taxon>Viridiplantae</taxon>
        <taxon>Streptophyta</taxon>
        <taxon>Embryophyta</taxon>
        <taxon>Tracheophyta</taxon>
        <taxon>Spermatophyta</taxon>
        <taxon>Magnoliopsida</taxon>
        <taxon>eudicotyledons</taxon>
        <taxon>Gunneridae</taxon>
        <taxon>Pentapetalae</taxon>
        <taxon>rosids</taxon>
        <taxon>malvids</taxon>
        <taxon>Brassicales</taxon>
        <taxon>Brassicaceae</taxon>
        <taxon>Camelineae</taxon>
        <taxon>Arabidopsis</taxon>
    </lineage>
</organism>
<sequence>MATKVYIVYYSMYGHVEKLAQEIRKGAASVDGVEAILWQVPETLQEDVLSKMSAPPKSDAPIITPNELAEADGFIFGFPTRFGMMAAQFKAFLDATGGLWRTQQLAGKPAGIFYSTGSQGGGQETTALTAITQLVHHGMIFVPIGYTFGAGMFEMENVKGGSPYGAGTFAGDGSRQPTELELGQAFHQGKYIAAISKKLKGPAAA</sequence>
<gene>
    <name evidence="6" type="ordered locus">At4g27270</name>
</gene>
<comment type="function">
    <text evidence="2">Catalyzes the transfer of electrons from NADH and NADPH to reduce quinone to the hydroquinone state.</text>
</comment>
<comment type="catalytic activity">
    <reaction evidence="2">
        <text>a quinone + NADH + H(+) = a quinol + NAD(+)</text>
        <dbReference type="Rhea" id="RHEA:46160"/>
        <dbReference type="ChEBI" id="CHEBI:15378"/>
        <dbReference type="ChEBI" id="CHEBI:24646"/>
        <dbReference type="ChEBI" id="CHEBI:57540"/>
        <dbReference type="ChEBI" id="CHEBI:57945"/>
        <dbReference type="ChEBI" id="CHEBI:132124"/>
        <dbReference type="EC" id="1.6.5.2"/>
    </reaction>
</comment>
<comment type="catalytic activity">
    <reaction evidence="2">
        <text>a quinone + NADPH + H(+) = a quinol + NADP(+)</text>
        <dbReference type="Rhea" id="RHEA:46164"/>
        <dbReference type="ChEBI" id="CHEBI:15378"/>
        <dbReference type="ChEBI" id="CHEBI:24646"/>
        <dbReference type="ChEBI" id="CHEBI:57783"/>
        <dbReference type="ChEBI" id="CHEBI:58349"/>
        <dbReference type="ChEBI" id="CHEBI:132124"/>
        <dbReference type="EC" id="1.6.5.2"/>
    </reaction>
</comment>
<comment type="cofactor">
    <cofactor evidence="2">
        <name>FMN</name>
        <dbReference type="ChEBI" id="CHEBI:58210"/>
    </cofactor>
    <text evidence="2">Binds 1 FMN per monomer.</text>
</comment>
<comment type="subcellular location">
    <subcellularLocation>
        <location evidence="4">Cell membrane</location>
    </subcellularLocation>
</comment>
<comment type="similarity">
    <text evidence="5">Belongs to the WrbA family.</text>
</comment>
<comment type="sequence caution" evidence="5">
    <conflict type="erroneous gene model prediction">
        <sequence resource="EMBL-CDS" id="CAA19721"/>
    </conflict>
</comment>
<comment type="sequence caution" evidence="5">
    <conflict type="erroneous gene model prediction">
        <sequence resource="EMBL-CDS" id="CAB79582"/>
    </conflict>
</comment>
<evidence type="ECO:0000250" key="1">
    <source>
        <dbReference type="UniProtKB" id="P0A8G6"/>
    </source>
</evidence>
<evidence type="ECO:0000250" key="2">
    <source>
        <dbReference type="UniProtKB" id="Q9LSQ5"/>
    </source>
</evidence>
<evidence type="ECO:0000255" key="3">
    <source>
        <dbReference type="PROSITE-ProRule" id="PRU00088"/>
    </source>
</evidence>
<evidence type="ECO:0000269" key="4">
    <source>
    </source>
</evidence>
<evidence type="ECO:0000305" key="5"/>
<evidence type="ECO:0000312" key="6">
    <source>
        <dbReference type="Araport" id="AT4G27270"/>
    </source>
</evidence>